<proteinExistence type="evidence at protein level"/>
<protein>
    <recommendedName>
        <fullName>Peroxiredoxin-4</fullName>
        <ecNumber evidence="1">1.11.1.24</ecNumber>
    </recommendedName>
    <alternativeName>
        <fullName evidence="5">Thioredoxin-dependent peroxiredoxin 4</fullName>
    </alternativeName>
</protein>
<dbReference type="EC" id="1.11.1.24" evidence="1"/>
<dbReference type="EMBL" id="AC123513">
    <property type="protein sequence ID" value="AAM44383.1"/>
    <property type="molecule type" value="Genomic_DNA"/>
</dbReference>
<dbReference type="EMBL" id="AAFI02000012">
    <property type="protein sequence ID" value="EAL70321.2"/>
    <property type="molecule type" value="Genomic_DNA"/>
</dbReference>
<dbReference type="EMBL" id="AAFI02000012">
    <property type="protein sequence ID" value="EAL70322.1"/>
    <property type="molecule type" value="Genomic_DNA"/>
</dbReference>
<dbReference type="RefSeq" id="XP_644051.2">
    <property type="nucleotide sequence ID" value="XM_638959.2"/>
</dbReference>
<dbReference type="RefSeq" id="XP_644052.1">
    <property type="nucleotide sequence ID" value="XM_638960.1"/>
</dbReference>
<dbReference type="SMR" id="Q555L5"/>
<dbReference type="FunCoup" id="Q555L5">
    <property type="interactions" value="467"/>
</dbReference>
<dbReference type="STRING" id="44689.Q555L5"/>
<dbReference type="PeroxiBase" id="4100">
    <property type="entry name" value="Dd2CysPrx"/>
</dbReference>
<dbReference type="PaxDb" id="44689-DDB0305016"/>
<dbReference type="EnsemblProtists" id="EAL70321">
    <property type="protein sequence ID" value="EAL70321"/>
    <property type="gene ID" value="DDB_G0274859"/>
</dbReference>
<dbReference type="EnsemblProtists" id="EAL70322">
    <property type="protein sequence ID" value="EAL70322"/>
    <property type="gene ID" value="DDB_G0274859"/>
</dbReference>
<dbReference type="GeneID" id="8619481"/>
<dbReference type="KEGG" id="ddi:DDB_G0274859"/>
<dbReference type="dictyBase" id="DDB_G0274859">
    <property type="gene designation" value="prdx4"/>
</dbReference>
<dbReference type="VEuPathDB" id="AmoebaDB:DDB_G0274859"/>
<dbReference type="eggNOG" id="KOG0852">
    <property type="taxonomic scope" value="Eukaryota"/>
</dbReference>
<dbReference type="HOGENOM" id="CLU_042529_21_0_1"/>
<dbReference type="InParanoid" id="Q555L5"/>
<dbReference type="OMA" id="HYAFGDV"/>
<dbReference type="PhylomeDB" id="Q555L5"/>
<dbReference type="Reactome" id="R-DDI-3299685">
    <property type="pathway name" value="Detoxification of Reactive Oxygen Species"/>
</dbReference>
<dbReference type="Reactome" id="R-DDI-5628897">
    <property type="pathway name" value="TP53 Regulates Metabolic Genes"/>
</dbReference>
<dbReference type="Reactome" id="R-DDI-6798695">
    <property type="pathway name" value="Neutrophil degranulation"/>
</dbReference>
<dbReference type="Reactome" id="R-DDI-9818027">
    <property type="pathway name" value="NFE2L2 regulating anti-oxidant/detoxification enzymes"/>
</dbReference>
<dbReference type="PRO" id="PR:Q555L5"/>
<dbReference type="Proteomes" id="UP000002195">
    <property type="component" value="Chromosome 2"/>
</dbReference>
<dbReference type="GO" id="GO:0005829">
    <property type="term" value="C:cytosol"/>
    <property type="evidence" value="ECO:0000318"/>
    <property type="project" value="GO_Central"/>
</dbReference>
<dbReference type="GO" id="GO:0005783">
    <property type="term" value="C:endoplasmic reticulum"/>
    <property type="evidence" value="ECO:0007669"/>
    <property type="project" value="UniProtKB-SubCell"/>
</dbReference>
<dbReference type="GO" id="GO:0045335">
    <property type="term" value="C:phagocytic vesicle"/>
    <property type="evidence" value="ECO:0007005"/>
    <property type="project" value="dictyBase"/>
</dbReference>
<dbReference type="GO" id="GO:0008379">
    <property type="term" value="F:thioredoxin peroxidase activity"/>
    <property type="evidence" value="ECO:0000318"/>
    <property type="project" value="GO_Central"/>
</dbReference>
<dbReference type="GO" id="GO:0045454">
    <property type="term" value="P:cell redox homeostasis"/>
    <property type="evidence" value="ECO:0000318"/>
    <property type="project" value="GO_Central"/>
</dbReference>
<dbReference type="GO" id="GO:0042744">
    <property type="term" value="P:hydrogen peroxide catabolic process"/>
    <property type="evidence" value="ECO:0000318"/>
    <property type="project" value="GO_Central"/>
</dbReference>
<dbReference type="GO" id="GO:0046689">
    <property type="term" value="P:response to mercury ion"/>
    <property type="evidence" value="ECO:0000314"/>
    <property type="project" value="dictyBase"/>
</dbReference>
<dbReference type="GO" id="GO:0006979">
    <property type="term" value="P:response to oxidative stress"/>
    <property type="evidence" value="ECO:0000318"/>
    <property type="project" value="GO_Central"/>
</dbReference>
<dbReference type="CDD" id="cd03015">
    <property type="entry name" value="PRX_Typ2cys"/>
    <property type="match status" value="1"/>
</dbReference>
<dbReference type="FunFam" id="3.40.30.10:FF:000432">
    <property type="entry name" value="Tryparedoxin peroxidase, putative"/>
    <property type="match status" value="1"/>
</dbReference>
<dbReference type="Gene3D" id="3.40.30.10">
    <property type="entry name" value="Glutaredoxin"/>
    <property type="match status" value="1"/>
</dbReference>
<dbReference type="InterPro" id="IPR000866">
    <property type="entry name" value="AhpC/TSA"/>
</dbReference>
<dbReference type="InterPro" id="IPR050217">
    <property type="entry name" value="Peroxiredoxin"/>
</dbReference>
<dbReference type="InterPro" id="IPR019479">
    <property type="entry name" value="Peroxiredoxin_C"/>
</dbReference>
<dbReference type="InterPro" id="IPR036249">
    <property type="entry name" value="Thioredoxin-like_sf"/>
</dbReference>
<dbReference type="InterPro" id="IPR013766">
    <property type="entry name" value="Thioredoxin_domain"/>
</dbReference>
<dbReference type="PANTHER" id="PTHR10681:SF171">
    <property type="entry name" value="PEROXIREDOXIN 4"/>
    <property type="match status" value="1"/>
</dbReference>
<dbReference type="PANTHER" id="PTHR10681">
    <property type="entry name" value="THIOREDOXIN PEROXIDASE"/>
    <property type="match status" value="1"/>
</dbReference>
<dbReference type="Pfam" id="PF10417">
    <property type="entry name" value="1-cysPrx_C"/>
    <property type="match status" value="1"/>
</dbReference>
<dbReference type="Pfam" id="PF00578">
    <property type="entry name" value="AhpC-TSA"/>
    <property type="match status" value="1"/>
</dbReference>
<dbReference type="SUPFAM" id="SSF52833">
    <property type="entry name" value="Thioredoxin-like"/>
    <property type="match status" value="1"/>
</dbReference>
<dbReference type="PROSITE" id="PS51352">
    <property type="entry name" value="THIOREDOXIN_2"/>
    <property type="match status" value="1"/>
</dbReference>
<organism>
    <name type="scientific">Dictyostelium discoideum</name>
    <name type="common">Social amoeba</name>
    <dbReference type="NCBI Taxonomy" id="44689"/>
    <lineage>
        <taxon>Eukaryota</taxon>
        <taxon>Amoebozoa</taxon>
        <taxon>Evosea</taxon>
        <taxon>Eumycetozoa</taxon>
        <taxon>Dictyostelia</taxon>
        <taxon>Dictyosteliales</taxon>
        <taxon>Dictyosteliaceae</taxon>
        <taxon>Dictyostelium</taxon>
    </lineage>
</organism>
<sequence>MRSATKLFKNLSKSVVQLKTVKPVSSLNFGYIKTRQFSTSTTDSSNLFLNNNNQFQNFTFPTKQQIRIRKPAPAFKGQAVVNGEFKEISLDDYKGKYLYLFFYPLDFTFVCPTEIIAFSNAAEEFKKAGCELVGCSIDSPFTHLAWINTPRKEGGLGGINIPLLSDLTHQISKDYGVYIEEDGHTIRGSILIDKEGLVRVITMNDNPVGRSVDEAIRTLKALKFTDQFGEVCPANWSEGDKSMKADPKGSKEYFEAVNK</sequence>
<evidence type="ECO:0000250" key="1">
    <source>
        <dbReference type="UniProtKB" id="Q13162"/>
    </source>
</evidence>
<evidence type="ECO:0000255" key="2">
    <source>
        <dbReference type="PROSITE-ProRule" id="PRU00691"/>
    </source>
</evidence>
<evidence type="ECO:0000269" key="3">
    <source>
    </source>
</evidence>
<evidence type="ECO:0000269" key="4">
    <source>
    </source>
</evidence>
<evidence type="ECO:0000305" key="5"/>
<accession>Q555L5</accession>
<accession>Q555L4</accession>
<accession>Q8MP16</accession>
<name>PRDX4_DICDI</name>
<gene>
    <name type="primary">prdx4</name>
    <name type="ORF">DDB_G0274859</name>
</gene>
<reference key="1">
    <citation type="journal article" date="2002" name="Nature">
        <title>Sequence and analysis of chromosome 2 of Dictyostelium discoideum.</title>
        <authorList>
            <person name="Gloeckner G."/>
            <person name="Eichinger L."/>
            <person name="Szafranski K."/>
            <person name="Pachebat J.A."/>
            <person name="Bankier A.T."/>
            <person name="Dear P.H."/>
            <person name="Lehmann R."/>
            <person name="Baumgart C."/>
            <person name="Parra G."/>
            <person name="Abril J.F."/>
            <person name="Guigo R."/>
            <person name="Kumpf K."/>
            <person name="Tunggal B."/>
            <person name="Cox E.C."/>
            <person name="Quail M.A."/>
            <person name="Platzer M."/>
            <person name="Rosenthal A."/>
            <person name="Noegel A.A."/>
        </authorList>
    </citation>
    <scope>NUCLEOTIDE SEQUENCE [LARGE SCALE GENOMIC DNA] (ISOFORM 1)</scope>
    <source>
        <strain>AX4</strain>
    </source>
</reference>
<reference key="2">
    <citation type="journal article" date="2005" name="Nature">
        <title>The genome of the social amoeba Dictyostelium discoideum.</title>
        <authorList>
            <person name="Eichinger L."/>
            <person name="Pachebat J.A."/>
            <person name="Gloeckner G."/>
            <person name="Rajandream M.A."/>
            <person name="Sucgang R."/>
            <person name="Berriman M."/>
            <person name="Song J."/>
            <person name="Olsen R."/>
            <person name="Szafranski K."/>
            <person name="Xu Q."/>
            <person name="Tunggal B."/>
            <person name="Kummerfeld S."/>
            <person name="Madera M."/>
            <person name="Konfortov B.A."/>
            <person name="Rivero F."/>
            <person name="Bankier A.T."/>
            <person name="Lehmann R."/>
            <person name="Hamlin N."/>
            <person name="Davies R."/>
            <person name="Gaudet P."/>
            <person name="Fey P."/>
            <person name="Pilcher K."/>
            <person name="Chen G."/>
            <person name="Saunders D."/>
            <person name="Sodergren E.J."/>
            <person name="Davis P."/>
            <person name="Kerhornou A."/>
            <person name="Nie X."/>
            <person name="Hall N."/>
            <person name="Anjard C."/>
            <person name="Hemphill L."/>
            <person name="Bason N."/>
            <person name="Farbrother P."/>
            <person name="Desany B."/>
            <person name="Just E."/>
            <person name="Morio T."/>
            <person name="Rost R."/>
            <person name="Churcher C.M."/>
            <person name="Cooper J."/>
            <person name="Haydock S."/>
            <person name="van Driessche N."/>
            <person name="Cronin A."/>
            <person name="Goodhead I."/>
            <person name="Muzny D.M."/>
            <person name="Mourier T."/>
            <person name="Pain A."/>
            <person name="Lu M."/>
            <person name="Harper D."/>
            <person name="Lindsay R."/>
            <person name="Hauser H."/>
            <person name="James K.D."/>
            <person name="Quiles M."/>
            <person name="Madan Babu M."/>
            <person name="Saito T."/>
            <person name="Buchrieser C."/>
            <person name="Wardroper A."/>
            <person name="Felder M."/>
            <person name="Thangavelu M."/>
            <person name="Johnson D."/>
            <person name="Knights A."/>
            <person name="Loulseged H."/>
            <person name="Mungall K.L."/>
            <person name="Oliver K."/>
            <person name="Price C."/>
            <person name="Quail M.A."/>
            <person name="Urushihara H."/>
            <person name="Hernandez J."/>
            <person name="Rabbinowitsch E."/>
            <person name="Steffen D."/>
            <person name="Sanders M."/>
            <person name="Ma J."/>
            <person name="Kohara Y."/>
            <person name="Sharp S."/>
            <person name="Simmonds M.N."/>
            <person name="Spiegler S."/>
            <person name="Tivey A."/>
            <person name="Sugano S."/>
            <person name="White B."/>
            <person name="Walker D."/>
            <person name="Woodward J.R."/>
            <person name="Winckler T."/>
            <person name="Tanaka Y."/>
            <person name="Shaulsky G."/>
            <person name="Schleicher M."/>
            <person name="Weinstock G.M."/>
            <person name="Rosenthal A."/>
            <person name="Cox E.C."/>
            <person name="Chisholm R.L."/>
            <person name="Gibbs R.A."/>
            <person name="Loomis W.F."/>
            <person name="Platzer M."/>
            <person name="Kay R.R."/>
            <person name="Williams J.G."/>
            <person name="Dear P.H."/>
            <person name="Noegel A.A."/>
            <person name="Barrell B.G."/>
            <person name="Kuspa A."/>
        </authorList>
    </citation>
    <scope>NUCLEOTIDE SEQUENCE [LARGE SCALE GENOMIC DNA]</scope>
    <scope>ALTERNATIVE SPLICING (ISOFORMS 1 AND 2)</scope>
    <source>
        <strain>AX4</strain>
    </source>
</reference>
<reference key="3">
    <citation type="journal article" date="2004" name="Eukaryot. Cell">
        <title>Control of cell type proportioning in Dictyostelium discoideum by differentiation-inducing factor as determined by in situ hybridization.</title>
        <authorList>
            <person name="Maruo T."/>
            <person name="Sakamoto H."/>
            <person name="Iranfar N."/>
            <person name="Fuller D."/>
            <person name="Morio T."/>
            <person name="Urushihara H."/>
            <person name="Tanaka Y."/>
            <person name="Maeda M."/>
            <person name="Loomis W.F."/>
        </authorList>
    </citation>
    <scope>DEVELOPMENTAL STAGE [LARGE SCALE ANALYSIS]</scope>
</reference>
<reference key="4">
    <citation type="journal article" date="2006" name="Mol. Cell. Proteomics">
        <title>Proteomics fingerprinting of phagosome maturation and evidence for the role of a Galpha during uptake.</title>
        <authorList>
            <person name="Gotthardt D."/>
            <person name="Blancheteau V."/>
            <person name="Bosserhoff A."/>
            <person name="Ruppert T."/>
            <person name="Delorenzi M."/>
            <person name="Soldati T."/>
        </authorList>
    </citation>
    <scope>IDENTIFICATION BY MASS SPECTROMETRY [LARGE SCALE ANALYSIS]</scope>
    <source>
        <strain>AX2</strain>
    </source>
</reference>
<reference key="5">
    <citation type="journal article" date="2008" name="Mol. Microbiol.">
        <title>Methylglyoxal accumulation by glutathione depletion leads to cell cycle arrest in Dictyostelium.</title>
        <authorList>
            <person name="Choi C.H."/>
            <person name="Park S.J."/>
            <person name="Jeong S.Y."/>
            <person name="Yim H.S."/>
            <person name="Kang S.O."/>
        </authorList>
    </citation>
    <scope>INDUCTION [LARGE SCALE ANALYSIS]</scope>
</reference>
<reference key="6">
    <citation type="journal article" date="2009" name="Int. J. Med. Microbiol.">
        <title>Proteomic analysis of Legionella-containing phagosomes isolated from Dictyostelium.</title>
        <authorList>
            <person name="Shevchuk O."/>
            <person name="Batzilla C."/>
            <person name="Haegele S."/>
            <person name="Kusch H."/>
            <person name="Engelmann S."/>
            <person name="Hecker M."/>
            <person name="Haas A."/>
            <person name="Heuner K."/>
            <person name="Gloeckner G."/>
            <person name="Steinert M."/>
        </authorList>
    </citation>
    <scope>IDENTIFICATION [LARGE SCALE ANALYSIS]</scope>
</reference>
<feature type="chain" id="PRO_0000393334" description="Peroxiredoxin-4">
    <location>
        <begin position="1"/>
        <end position="259"/>
    </location>
</feature>
<feature type="domain" description="Thioredoxin" evidence="2">
    <location>
        <begin position="66"/>
        <end position="224"/>
    </location>
</feature>
<feature type="active site" description="Cysteine sulfenic acid (-SOH) intermediate" evidence="1">
    <location>
        <position position="111"/>
    </location>
</feature>
<feature type="disulfide bond" description="Interchain (with C-232); in linked form" evidence="1">
    <location>
        <position position="111"/>
    </location>
</feature>
<feature type="disulfide bond" description="Interchain (with C-111); in linked form" evidence="1">
    <location>
        <position position="232"/>
    </location>
</feature>
<feature type="splice variant" id="VSP_038918" description="In isoform 2." evidence="5">
    <original>MRSATKLFKNLSKSVVQLKTVKPVSSLNFGYIKTRQFSTSTTDSSNLFLNNNNQFQNFTFPTKQ</original>
    <variation>MTHPHCHKKE</variation>
    <location>
        <begin position="1"/>
        <end position="64"/>
    </location>
</feature>
<keyword id="KW-0025">Alternative splicing</keyword>
<keyword id="KW-0049">Antioxidant</keyword>
<keyword id="KW-0963">Cytoplasm</keyword>
<keyword id="KW-1015">Disulfide bond</keyword>
<keyword id="KW-0256">Endoplasmic reticulum</keyword>
<keyword id="KW-0560">Oxidoreductase</keyword>
<keyword id="KW-0575">Peroxidase</keyword>
<keyword id="KW-0676">Redox-active center</keyword>
<keyword id="KW-1185">Reference proteome</keyword>
<comment type="function">
    <text evidence="1">Thiol-specific peroxidase that catalyzes the reduction of hydrogen peroxide and organic hydroperoxides to water and alcohols, respectively. Plays a role in cell protection against oxidative stress by detoxifying peroxides and as sensor of hydrogen peroxide-mediated signaling events. Regulates the activation of NF-kappa-B in the cytosol by a modulation of I-kappa-B-alpha phosphorylation.</text>
</comment>
<comment type="catalytic activity">
    <reaction evidence="1">
        <text>a hydroperoxide + [thioredoxin]-dithiol = an alcohol + [thioredoxin]-disulfide + H2O</text>
        <dbReference type="Rhea" id="RHEA:62620"/>
        <dbReference type="Rhea" id="RHEA-COMP:10698"/>
        <dbReference type="Rhea" id="RHEA-COMP:10700"/>
        <dbReference type="ChEBI" id="CHEBI:15377"/>
        <dbReference type="ChEBI" id="CHEBI:29950"/>
        <dbReference type="ChEBI" id="CHEBI:30879"/>
        <dbReference type="ChEBI" id="CHEBI:35924"/>
        <dbReference type="ChEBI" id="CHEBI:50058"/>
        <dbReference type="EC" id="1.11.1.24"/>
    </reaction>
</comment>
<comment type="subunit">
    <text evidence="1">Homodimer; disulfide-linked, upon oxidation. 5 homodimers assemble to form a ring-like decamer.</text>
</comment>
<comment type="subcellular location">
    <subcellularLocation>
        <location evidence="1">Cytoplasm</location>
    </subcellularLocation>
    <subcellularLocation>
        <location evidence="1">Endoplasmic reticulum</location>
    </subcellularLocation>
</comment>
<comment type="alternative products">
    <event type="alternative splicing"/>
    <isoform>
        <id>Q555L5-1</id>
        <name>1</name>
        <sequence type="displayed"/>
    </isoform>
    <isoform>
        <id>Q555L5-2</id>
        <name>2</name>
        <sequence type="described" ref="VSP_038918"/>
    </isoform>
</comment>
<comment type="developmental stage">
    <text evidence="3">Pre-spore specific.</text>
</comment>
<comment type="induction">
    <text evidence="4">Up-regulated in gcsA null cells devoid of glutathione.</text>
</comment>
<comment type="miscellaneous">
    <text evidence="1">The active site is a conserved redox-active cysteine residue, the peroxidatic cysteine (C(P)), which makes the nucleophilic attack on the peroxide substrate. The peroxide oxidizes the C(P)-SH to cysteine sulfenic acid (C(P)-SOH), which then reacts with another cysteine residue, the resolving cysteine (C(R)), to form a disulfide bridge. The disulfide is subsequently reduced by an appropriate electron donor to complete the catalytic cycle. In this typical 2-Cys peroxiredoxin, C(R) is provided by the other dimeric subunit to form an intersubunit disulfide. The disulfide is subsequently reduced by thioredoxin.</text>
</comment>
<comment type="similarity">
    <text evidence="5">Belongs to the peroxiredoxin family. AhpC/Prx1 subfamily.</text>
</comment>